<sequence>MTKEKLILAYSGGLDTSVAIAWLKKDYDVIAVCMDVGEGKNLEFIHDKALSIGAIESHVLDVKEEFAQEYVLPALQAHAYYEQKYPLVSALSRPLISKKLVEMAHKTGATTIAHGCTGKGNDQVRFEVAIAALDPSLKVVAPVREWKWAREEEIIFAKENGVPVPADLDSPYSVDQNLWGRANECGVLENPWNEAPEDTFGITTSPENAPDTPEYVDIEFKAGIPVAVNGEKLSLANLIQRLNVIAGKHGVGRIDHVENRLVGIKSREIYECPGAITLLTAHKEIEDLTLVREVSHFKPIVSNELSNLIYNGLWFNPATDALKAYLAQTQAVVNGTAKVKLYKGSAKVVARKSPNSLYDEDLATYTSADTFDQDAAVGFIKLWGLPTKVNAEIHKKS</sequence>
<dbReference type="EC" id="6.3.4.5" evidence="1"/>
<dbReference type="EMBL" id="CP000408">
    <property type="protein sequence ID" value="ABP93177.1"/>
    <property type="molecule type" value="Genomic_DNA"/>
</dbReference>
<dbReference type="SMR" id="A4W488"/>
<dbReference type="KEGG" id="ssv:SSU98_2019"/>
<dbReference type="HOGENOM" id="CLU_032784_4_2_9"/>
<dbReference type="UniPathway" id="UPA00068">
    <property type="reaction ID" value="UER00113"/>
</dbReference>
<dbReference type="GO" id="GO:0005737">
    <property type="term" value="C:cytoplasm"/>
    <property type="evidence" value="ECO:0007669"/>
    <property type="project" value="UniProtKB-SubCell"/>
</dbReference>
<dbReference type="GO" id="GO:0004055">
    <property type="term" value="F:argininosuccinate synthase activity"/>
    <property type="evidence" value="ECO:0007669"/>
    <property type="project" value="UniProtKB-UniRule"/>
</dbReference>
<dbReference type="GO" id="GO:0005524">
    <property type="term" value="F:ATP binding"/>
    <property type="evidence" value="ECO:0007669"/>
    <property type="project" value="UniProtKB-UniRule"/>
</dbReference>
<dbReference type="GO" id="GO:0000053">
    <property type="term" value="P:argininosuccinate metabolic process"/>
    <property type="evidence" value="ECO:0007669"/>
    <property type="project" value="TreeGrafter"/>
</dbReference>
<dbReference type="GO" id="GO:0006526">
    <property type="term" value="P:L-arginine biosynthetic process"/>
    <property type="evidence" value="ECO:0007669"/>
    <property type="project" value="UniProtKB-UniRule"/>
</dbReference>
<dbReference type="GO" id="GO:0000050">
    <property type="term" value="P:urea cycle"/>
    <property type="evidence" value="ECO:0007669"/>
    <property type="project" value="TreeGrafter"/>
</dbReference>
<dbReference type="CDD" id="cd01999">
    <property type="entry name" value="ASS"/>
    <property type="match status" value="1"/>
</dbReference>
<dbReference type="FunFam" id="1.20.5.470:FF:000002">
    <property type="entry name" value="Argininosuccinate synthase"/>
    <property type="match status" value="1"/>
</dbReference>
<dbReference type="FunFam" id="3.40.50.620:FF:000038">
    <property type="entry name" value="Argininosuccinate synthase"/>
    <property type="match status" value="1"/>
</dbReference>
<dbReference type="FunFam" id="3.90.1260.10:FF:000007">
    <property type="entry name" value="Argininosuccinate synthase"/>
    <property type="match status" value="1"/>
</dbReference>
<dbReference type="Gene3D" id="3.90.1260.10">
    <property type="entry name" value="Argininosuccinate synthetase, chain A, domain 2"/>
    <property type="match status" value="1"/>
</dbReference>
<dbReference type="Gene3D" id="3.40.50.620">
    <property type="entry name" value="HUPs"/>
    <property type="match status" value="1"/>
</dbReference>
<dbReference type="Gene3D" id="1.20.5.470">
    <property type="entry name" value="Single helix bin"/>
    <property type="match status" value="1"/>
</dbReference>
<dbReference type="HAMAP" id="MF_00005">
    <property type="entry name" value="Arg_succ_synth_type1"/>
    <property type="match status" value="1"/>
</dbReference>
<dbReference type="InterPro" id="IPR048268">
    <property type="entry name" value="Arginosuc_syn_C"/>
</dbReference>
<dbReference type="InterPro" id="IPR048267">
    <property type="entry name" value="Arginosuc_syn_N"/>
</dbReference>
<dbReference type="InterPro" id="IPR001518">
    <property type="entry name" value="Arginosuc_synth"/>
</dbReference>
<dbReference type="InterPro" id="IPR018223">
    <property type="entry name" value="Arginosuc_synth_CS"/>
</dbReference>
<dbReference type="InterPro" id="IPR023434">
    <property type="entry name" value="Arginosuc_synth_type_1_subfam"/>
</dbReference>
<dbReference type="InterPro" id="IPR024074">
    <property type="entry name" value="AS_cat/multimer_dom_body"/>
</dbReference>
<dbReference type="InterPro" id="IPR014729">
    <property type="entry name" value="Rossmann-like_a/b/a_fold"/>
</dbReference>
<dbReference type="NCBIfam" id="TIGR00032">
    <property type="entry name" value="argG"/>
    <property type="match status" value="1"/>
</dbReference>
<dbReference type="NCBIfam" id="NF001770">
    <property type="entry name" value="PRK00509.1"/>
    <property type="match status" value="1"/>
</dbReference>
<dbReference type="PANTHER" id="PTHR11587">
    <property type="entry name" value="ARGININOSUCCINATE SYNTHASE"/>
    <property type="match status" value="1"/>
</dbReference>
<dbReference type="PANTHER" id="PTHR11587:SF2">
    <property type="entry name" value="ARGININOSUCCINATE SYNTHASE"/>
    <property type="match status" value="1"/>
</dbReference>
<dbReference type="Pfam" id="PF20979">
    <property type="entry name" value="Arginosuc_syn_C"/>
    <property type="match status" value="1"/>
</dbReference>
<dbReference type="Pfam" id="PF00764">
    <property type="entry name" value="Arginosuc_synth"/>
    <property type="match status" value="1"/>
</dbReference>
<dbReference type="SUPFAM" id="SSF52402">
    <property type="entry name" value="Adenine nucleotide alpha hydrolases-like"/>
    <property type="match status" value="1"/>
</dbReference>
<dbReference type="SUPFAM" id="SSF69864">
    <property type="entry name" value="Argininosuccinate synthetase, C-terminal domain"/>
    <property type="match status" value="1"/>
</dbReference>
<dbReference type="PROSITE" id="PS00564">
    <property type="entry name" value="ARGININOSUCCIN_SYN_1"/>
    <property type="match status" value="1"/>
</dbReference>
<dbReference type="PROSITE" id="PS00565">
    <property type="entry name" value="ARGININOSUCCIN_SYN_2"/>
    <property type="match status" value="1"/>
</dbReference>
<protein>
    <recommendedName>
        <fullName evidence="1">Argininosuccinate synthase</fullName>
        <ecNumber evidence="1">6.3.4.5</ecNumber>
    </recommendedName>
    <alternativeName>
        <fullName evidence="1">Citrulline--aspartate ligase</fullName>
    </alternativeName>
</protein>
<organism>
    <name type="scientific">Streptococcus suis (strain 98HAH33)</name>
    <dbReference type="NCBI Taxonomy" id="391296"/>
    <lineage>
        <taxon>Bacteria</taxon>
        <taxon>Bacillati</taxon>
        <taxon>Bacillota</taxon>
        <taxon>Bacilli</taxon>
        <taxon>Lactobacillales</taxon>
        <taxon>Streptococcaceae</taxon>
        <taxon>Streptococcus</taxon>
    </lineage>
</organism>
<reference key="1">
    <citation type="journal article" date="2007" name="PLoS ONE">
        <title>A glimpse of streptococcal toxic shock syndrome from comparative genomics of S. suis 2 Chinese isolates.</title>
        <authorList>
            <person name="Chen C."/>
            <person name="Tang J."/>
            <person name="Dong W."/>
            <person name="Wang C."/>
            <person name="Feng Y."/>
            <person name="Wang J."/>
            <person name="Zheng F."/>
            <person name="Pan X."/>
            <person name="Liu D."/>
            <person name="Li M."/>
            <person name="Song Y."/>
            <person name="Zhu X."/>
            <person name="Sun H."/>
            <person name="Feng T."/>
            <person name="Guo Z."/>
            <person name="Ju A."/>
            <person name="Ge J."/>
            <person name="Dong Y."/>
            <person name="Sun W."/>
            <person name="Jiang Y."/>
            <person name="Wang J."/>
            <person name="Yan J."/>
            <person name="Yang H."/>
            <person name="Wang X."/>
            <person name="Gao G.F."/>
            <person name="Yang R."/>
            <person name="Wang J."/>
            <person name="Yu J."/>
        </authorList>
    </citation>
    <scope>NUCLEOTIDE SEQUENCE [LARGE SCALE GENOMIC DNA]</scope>
    <source>
        <strain>98HAH33</strain>
    </source>
</reference>
<proteinExistence type="inferred from homology"/>
<accession>A4W488</accession>
<gene>
    <name evidence="1" type="primary">argG</name>
    <name type="ordered locus">SSU98_2019</name>
</gene>
<feature type="chain" id="PRO_1000000440" description="Argininosuccinate synthase">
    <location>
        <begin position="1"/>
        <end position="397"/>
    </location>
</feature>
<feature type="binding site" evidence="1">
    <location>
        <begin position="9"/>
        <end position="17"/>
    </location>
    <ligand>
        <name>ATP</name>
        <dbReference type="ChEBI" id="CHEBI:30616"/>
    </ligand>
</feature>
<feature type="binding site" evidence="1">
    <location>
        <position position="85"/>
    </location>
    <ligand>
        <name>L-citrulline</name>
        <dbReference type="ChEBI" id="CHEBI:57743"/>
    </ligand>
</feature>
<feature type="binding site" evidence="1">
    <location>
        <position position="115"/>
    </location>
    <ligand>
        <name>ATP</name>
        <dbReference type="ChEBI" id="CHEBI:30616"/>
    </ligand>
</feature>
<feature type="binding site" evidence="1">
    <location>
        <position position="117"/>
    </location>
    <ligand>
        <name>L-aspartate</name>
        <dbReference type="ChEBI" id="CHEBI:29991"/>
    </ligand>
</feature>
<feature type="binding site" evidence="1">
    <location>
        <position position="121"/>
    </location>
    <ligand>
        <name>L-aspartate</name>
        <dbReference type="ChEBI" id="CHEBI:29991"/>
    </ligand>
</feature>
<feature type="binding site" evidence="1">
    <location>
        <position position="121"/>
    </location>
    <ligand>
        <name>L-citrulline</name>
        <dbReference type="ChEBI" id="CHEBI:57743"/>
    </ligand>
</feature>
<feature type="binding site" evidence="1">
    <location>
        <position position="122"/>
    </location>
    <ligand>
        <name>L-aspartate</name>
        <dbReference type="ChEBI" id="CHEBI:29991"/>
    </ligand>
</feature>
<feature type="binding site" evidence="1">
    <location>
        <position position="125"/>
    </location>
    <ligand>
        <name>L-citrulline</name>
        <dbReference type="ChEBI" id="CHEBI:57743"/>
    </ligand>
</feature>
<feature type="binding site" evidence="1">
    <location>
        <position position="173"/>
    </location>
    <ligand>
        <name>L-citrulline</name>
        <dbReference type="ChEBI" id="CHEBI:57743"/>
    </ligand>
</feature>
<feature type="binding site" evidence="1">
    <location>
        <position position="258"/>
    </location>
    <ligand>
        <name>L-citrulline</name>
        <dbReference type="ChEBI" id="CHEBI:57743"/>
    </ligand>
</feature>
<feature type="binding site" evidence="1">
    <location>
        <position position="270"/>
    </location>
    <ligand>
        <name>L-citrulline</name>
        <dbReference type="ChEBI" id="CHEBI:57743"/>
    </ligand>
</feature>
<comment type="catalytic activity">
    <reaction evidence="1">
        <text>L-citrulline + L-aspartate + ATP = 2-(N(omega)-L-arginino)succinate + AMP + diphosphate + H(+)</text>
        <dbReference type="Rhea" id="RHEA:10932"/>
        <dbReference type="ChEBI" id="CHEBI:15378"/>
        <dbReference type="ChEBI" id="CHEBI:29991"/>
        <dbReference type="ChEBI" id="CHEBI:30616"/>
        <dbReference type="ChEBI" id="CHEBI:33019"/>
        <dbReference type="ChEBI" id="CHEBI:57472"/>
        <dbReference type="ChEBI" id="CHEBI:57743"/>
        <dbReference type="ChEBI" id="CHEBI:456215"/>
        <dbReference type="EC" id="6.3.4.5"/>
    </reaction>
</comment>
<comment type="pathway">
    <text evidence="1">Amino-acid biosynthesis; L-arginine biosynthesis; L-arginine from L-ornithine and carbamoyl phosphate: step 2/3.</text>
</comment>
<comment type="subunit">
    <text evidence="1">Homotetramer.</text>
</comment>
<comment type="subcellular location">
    <subcellularLocation>
        <location evidence="1">Cytoplasm</location>
    </subcellularLocation>
</comment>
<comment type="similarity">
    <text evidence="1">Belongs to the argininosuccinate synthase family. Type 1 subfamily.</text>
</comment>
<evidence type="ECO:0000255" key="1">
    <source>
        <dbReference type="HAMAP-Rule" id="MF_00005"/>
    </source>
</evidence>
<name>ASSY_STRS2</name>
<keyword id="KW-0028">Amino-acid biosynthesis</keyword>
<keyword id="KW-0055">Arginine biosynthesis</keyword>
<keyword id="KW-0067">ATP-binding</keyword>
<keyword id="KW-0963">Cytoplasm</keyword>
<keyword id="KW-0436">Ligase</keyword>
<keyword id="KW-0547">Nucleotide-binding</keyword>